<protein>
    <recommendedName>
        <fullName>Uncharacterized protein R10</fullName>
    </recommendedName>
</protein>
<dbReference type="EMBL" id="AY653733">
    <property type="protein sequence ID" value="AAV50285.1"/>
    <property type="molecule type" value="Genomic_DNA"/>
</dbReference>
<dbReference type="SMR" id="Q5UP88"/>
<dbReference type="KEGG" id="vg:9924581"/>
<dbReference type="OrthoDB" id="29043at10239"/>
<dbReference type="Proteomes" id="UP000001134">
    <property type="component" value="Genome"/>
</dbReference>
<dbReference type="Pfam" id="PF13455">
    <property type="entry name" value="MUG113"/>
    <property type="match status" value="1"/>
</dbReference>
<evidence type="ECO:0000305" key="1"/>
<keyword id="KW-1185">Reference proteome</keyword>
<proteinExistence type="inferred from homology"/>
<gene>
    <name type="ordered locus">MIMI_R10</name>
</gene>
<organism>
    <name type="scientific">Acanthamoeba polyphaga mimivirus</name>
    <name type="common">APMV</name>
    <dbReference type="NCBI Taxonomy" id="212035"/>
    <lineage>
        <taxon>Viruses</taxon>
        <taxon>Varidnaviria</taxon>
        <taxon>Bamfordvirae</taxon>
        <taxon>Nucleocytoviricota</taxon>
        <taxon>Megaviricetes</taxon>
        <taxon>Imitervirales</taxon>
        <taxon>Mimiviridae</taxon>
        <taxon>Megamimivirinae</taxon>
        <taxon>Mimivirus</taxon>
        <taxon>Mimivirus bradfordmassiliense</taxon>
    </lineage>
</organism>
<organismHost>
    <name type="scientific">Acanthamoeba polyphaga</name>
    <name type="common">Amoeba</name>
    <dbReference type="NCBI Taxonomy" id="5757"/>
</organismHost>
<name>YR010_MIMIV</name>
<accession>Q5UP88</accession>
<reference key="1">
    <citation type="journal article" date="2004" name="Science">
        <title>The 1.2-megabase genome sequence of Mimivirus.</title>
        <authorList>
            <person name="Raoult D."/>
            <person name="Audic S."/>
            <person name="Robert C."/>
            <person name="Abergel C."/>
            <person name="Renesto P."/>
            <person name="Ogata H."/>
            <person name="La Scola B."/>
            <person name="Susan M."/>
            <person name="Claverie J.-M."/>
        </authorList>
    </citation>
    <scope>NUCLEOTIDE SEQUENCE [LARGE SCALE GENOMIC DNA]</scope>
    <source>
        <strain>Rowbotham-Bradford</strain>
    </source>
</reference>
<comment type="similarity">
    <text evidence="1">Belongs to the mimivirus R1 family.</text>
</comment>
<feature type="chain" id="PRO_0000243986" description="Uncharacterized protein R10">
    <location>
        <begin position="1"/>
        <end position="376"/>
    </location>
</feature>
<sequence>MSNHIAFYVITTLCYHGKKTYKIGIHTGTLDDLLSRYATYFPDIIVMYFQYTNNAREVESKLKKNLTEYRITNIKGNLSEWIVMKYEKLFSLIKREINSDSDIIVDETCENRLFSKYVDKSISNKNQNTTENKIEQLIAIDLSKHKISELIQKQSSNKLNETEKLVLKKHFFMRDLGLNSKIKDKKLRELLNEYLDDRTAIRRYEILFGYHKETKKDNIFNEKEKAKISIIIDLVNRLIGKKYTKLTDNIFKNGSKQHIIIENKQYNKAISDIIDNSIYFKDEEKNRALFYSRPGRFKPATDKESRIAYAKRIQNLLNSYNINLKSFERKSKNGKRGFTYSLCVDEQIRDIVRNKYKSSLAVDDKHMKMLCNDYGN</sequence>